<proteinExistence type="inferred from homology"/>
<keyword id="KW-1015">Disulfide bond</keyword>
<keyword id="KW-0528">Neurotoxin</keyword>
<keyword id="KW-0629">Postsynaptic neurotoxin</keyword>
<keyword id="KW-0964">Secreted</keyword>
<keyword id="KW-0732">Signal</keyword>
<keyword id="KW-0800">Toxin</keyword>
<reference key="1">
    <citation type="journal article" date="2010" name="J. Proteome Res.">
        <title>Molecular diversification of peptide toxins from the tarantula Haplopelma hainanum (Ornithoctonus hainana) venom based on transcriptomic, peptidomic, and genomic analyses.</title>
        <authorList>
            <person name="Tang X."/>
            <person name="Zhang Y."/>
            <person name="Hu W."/>
            <person name="Xu D."/>
            <person name="Tao H."/>
            <person name="Yang X."/>
            <person name="Li Y."/>
            <person name="Jiang L."/>
            <person name="Liang S."/>
        </authorList>
    </citation>
    <scope>NUCLEOTIDE SEQUENCE [LARGE SCALE GENOMIC DNA]</scope>
    <source>
        <tissue>Venom gland</tissue>
    </source>
</reference>
<sequence length="85" mass="9428">MKMTLIAIPTCAAVLVLHTTAAEELEAESQLMEVGMPDTELEAVDGERLFECSVSCEIEKEGNRDCKKKKCKGGWKCKFNMCVKV</sequence>
<accession>D2Y2J9</accession>
<organism>
    <name type="scientific">Cyriopagopus hainanus</name>
    <name type="common">Chinese bird spider</name>
    <name type="synonym">Haplopelma hainanum</name>
    <dbReference type="NCBI Taxonomy" id="209901"/>
    <lineage>
        <taxon>Eukaryota</taxon>
        <taxon>Metazoa</taxon>
        <taxon>Ecdysozoa</taxon>
        <taxon>Arthropoda</taxon>
        <taxon>Chelicerata</taxon>
        <taxon>Arachnida</taxon>
        <taxon>Araneae</taxon>
        <taxon>Mygalomorphae</taxon>
        <taxon>Theraphosidae</taxon>
        <taxon>Haplopelma</taxon>
    </lineage>
</organism>
<feature type="signal peptide" evidence="2">
    <location>
        <begin position="1"/>
        <end position="22"/>
    </location>
</feature>
<feature type="propeptide" id="PRO_0000400815" evidence="1">
    <location>
        <begin position="23"/>
        <end position="48"/>
    </location>
</feature>
<feature type="peptide" id="PRO_0000400816" description="U4-theraphotoxin-Hhn1p">
    <location>
        <begin position="49"/>
        <end position="85"/>
    </location>
</feature>
<feature type="disulfide bond" evidence="1">
    <location>
        <begin position="52"/>
        <end position="66"/>
    </location>
</feature>
<feature type="disulfide bond" evidence="1">
    <location>
        <begin position="56"/>
        <end position="77"/>
    </location>
</feature>
<feature type="disulfide bond" evidence="1">
    <location>
        <begin position="71"/>
        <end position="82"/>
    </location>
</feature>
<name>H2X01_CYRHA</name>
<comment type="function">
    <text evidence="1">Postsynaptic neurotoxin.</text>
</comment>
<comment type="subcellular location">
    <subcellularLocation>
        <location evidence="1">Secreted</location>
    </subcellularLocation>
</comment>
<comment type="tissue specificity">
    <text>Expressed by the venom gland.</text>
</comment>
<comment type="similarity">
    <text evidence="3">Belongs to the neurotoxin 12 (Hwtx-2) family. 02 (Hwtx-2) subfamily.</text>
</comment>
<evidence type="ECO:0000250" key="1"/>
<evidence type="ECO:0000255" key="2"/>
<evidence type="ECO:0000305" key="3"/>
<dbReference type="EMBL" id="GU293076">
    <property type="protein sequence ID" value="ADB56892.1"/>
    <property type="molecule type" value="Genomic_DNA"/>
</dbReference>
<dbReference type="SMR" id="D2Y2J9"/>
<dbReference type="ArachnoServer" id="AS001995">
    <property type="toxin name" value="U4-theraphotoxin-Hhn1p"/>
</dbReference>
<dbReference type="GO" id="GO:0005576">
    <property type="term" value="C:extracellular region"/>
    <property type="evidence" value="ECO:0007669"/>
    <property type="project" value="UniProtKB-SubCell"/>
</dbReference>
<dbReference type="GO" id="GO:0035792">
    <property type="term" value="C:host cell postsynaptic membrane"/>
    <property type="evidence" value="ECO:0007669"/>
    <property type="project" value="UniProtKB-KW"/>
</dbReference>
<dbReference type="GO" id="GO:0090729">
    <property type="term" value="F:toxin activity"/>
    <property type="evidence" value="ECO:0007669"/>
    <property type="project" value="UniProtKB-KW"/>
</dbReference>
<dbReference type="InterPro" id="IPR012625">
    <property type="entry name" value="Hwtx-2-like"/>
</dbReference>
<dbReference type="Pfam" id="PF08089">
    <property type="entry name" value="Toxin_20"/>
    <property type="match status" value="1"/>
</dbReference>
<dbReference type="SUPFAM" id="SSF57059">
    <property type="entry name" value="omega toxin-like"/>
    <property type="match status" value="1"/>
</dbReference>
<dbReference type="PROSITE" id="PS60022">
    <property type="entry name" value="HWTX_2"/>
    <property type="match status" value="1"/>
</dbReference>
<protein>
    <recommendedName>
        <fullName>U4-theraphotoxin-Hhn1p</fullName>
        <shortName>U4-TRTX-Hhn1p</shortName>
    </recommendedName>
    <alternativeName>
        <fullName>Hainantoxin-II-24</fullName>
        <shortName>HNTX-II-24</shortName>
    </alternativeName>
</protein>